<proteinExistence type="inferred from homology"/>
<name>GCSP_NEIMF</name>
<keyword id="KW-0560">Oxidoreductase</keyword>
<keyword id="KW-0663">Pyridoxal phosphate</keyword>
<feature type="chain" id="PRO_1000045592" description="Glycine dehydrogenase (decarboxylating)">
    <location>
        <begin position="1"/>
        <end position="950"/>
    </location>
</feature>
<feature type="modified residue" description="N6-(pyridoxal phosphate)lysine" evidence="1">
    <location>
        <position position="698"/>
    </location>
</feature>
<sequence length="950" mass="103840">MKLSELFNPNEFAARHLSFGDEAALLAAVGEKSMDEFVGNTVPQSIRMPSELDLPDALTEADALAKLKGIASKNVINKSYIGLGYYPTRVPNVILRNVLENPGWYTAYTPYQAEIAQGRLEALLNFQQVCIDLTGFPVAGASLLDEATAAAEAMAMAHRVGKVKSERFFVDARVYPQTLDVMKTRAKYFGFELVVSDFAKADDGEYFGALFQYVGKDGDVQDLQDVIGRLKAKGTIVAVAADIMSLVLLKSPAELGADIALGNTQRFGVPMGFGGPHAAYFAFKDAFKRSAPGRIIGVSKDASGKPALRMALSTREQHIRREKATSNICTAQALLANLAGMYAVYHGPEGVKRIANRIHALASAFADALVSDGINVVHKVFFDTVTVDFGNKEKADQVFAAALESGYNLRRVNDTQVAAAFHETSACEDLVDLYRAFTGKDTFAFADDVKGRLNAELLRQDDILQHPVFNRYHTEHEMLRYLKKLEDRDLAMNRSMISLGSCTMKLNATAEMLPITWAEFSDIHPYAPEAQTAGYRELLADMENSLKSITGFDAISFQPNSGAQGEYSGMLAIRRYQEAQGEAQRNICLIPKSAHGTNPATAAMLGLKVVVVDTDEHGNVNIDDLKAKAEQHRDALSAIMITYPSTHGVYEEGIRDICRIVHENGGQVYMDGANLNAQIGIMQPAEVGADVLHMNLHKTFCIPHGGGGPGMGPIGLKAHLAPFAPGHALTDTHSASADQTAVAAAAFGSASILPITWMYLTMMGKQGMEQATRWALLNANYVAKRLSEDYPILYTGKNGRVAHECIVDLRPLKAESGITETDIAKRLMDYGFHAPTVSFPVAGTLMIEPTESESKAELDRFIAALKQIKQEVLKVGRGEWPKEDNPLVNAPHTASDVTGEWAHPYSREEAVFPLPFVREHKFWPSVNRVDDVYGDRNLVCSCPPMENYED</sequence>
<organism>
    <name type="scientific">Neisseria meningitidis serogroup C / serotype 2a (strain ATCC 700532 / DSM 15464 / FAM18)</name>
    <dbReference type="NCBI Taxonomy" id="272831"/>
    <lineage>
        <taxon>Bacteria</taxon>
        <taxon>Pseudomonadati</taxon>
        <taxon>Pseudomonadota</taxon>
        <taxon>Betaproteobacteria</taxon>
        <taxon>Neisseriales</taxon>
        <taxon>Neisseriaceae</taxon>
        <taxon>Neisseria</taxon>
    </lineage>
</organism>
<accession>A1KV85</accession>
<comment type="function">
    <text evidence="1">The glycine cleavage system catalyzes the degradation of glycine. The P protein binds the alpha-amino group of glycine through its pyridoxal phosphate cofactor; CO(2) is released and the remaining methylamine moiety is then transferred to the lipoamide cofactor of the H protein.</text>
</comment>
<comment type="catalytic activity">
    <reaction evidence="1">
        <text>N(6)-[(R)-lipoyl]-L-lysyl-[glycine-cleavage complex H protein] + glycine + H(+) = N(6)-[(R)-S(8)-aminomethyldihydrolipoyl]-L-lysyl-[glycine-cleavage complex H protein] + CO2</text>
        <dbReference type="Rhea" id="RHEA:24304"/>
        <dbReference type="Rhea" id="RHEA-COMP:10494"/>
        <dbReference type="Rhea" id="RHEA-COMP:10495"/>
        <dbReference type="ChEBI" id="CHEBI:15378"/>
        <dbReference type="ChEBI" id="CHEBI:16526"/>
        <dbReference type="ChEBI" id="CHEBI:57305"/>
        <dbReference type="ChEBI" id="CHEBI:83099"/>
        <dbReference type="ChEBI" id="CHEBI:83143"/>
        <dbReference type="EC" id="1.4.4.2"/>
    </reaction>
</comment>
<comment type="cofactor">
    <cofactor evidence="1">
        <name>pyridoxal 5'-phosphate</name>
        <dbReference type="ChEBI" id="CHEBI:597326"/>
    </cofactor>
</comment>
<comment type="subunit">
    <text evidence="1">The glycine cleavage system is composed of four proteins: P, T, L and H.</text>
</comment>
<comment type="similarity">
    <text evidence="1">Belongs to the GcvP family.</text>
</comment>
<gene>
    <name evidence="1" type="primary">gcvP</name>
    <name type="ordered locus">NMC1594</name>
</gene>
<evidence type="ECO:0000255" key="1">
    <source>
        <dbReference type="HAMAP-Rule" id="MF_00711"/>
    </source>
</evidence>
<protein>
    <recommendedName>
        <fullName evidence="1">Glycine dehydrogenase (decarboxylating)</fullName>
        <ecNumber evidence="1">1.4.4.2</ecNumber>
    </recommendedName>
    <alternativeName>
        <fullName evidence="1">Glycine cleavage system P-protein</fullName>
    </alternativeName>
    <alternativeName>
        <fullName evidence="1">Glycine decarboxylase</fullName>
    </alternativeName>
    <alternativeName>
        <fullName evidence="1">Glycine dehydrogenase (aminomethyl-transferring)</fullName>
    </alternativeName>
</protein>
<dbReference type="EC" id="1.4.4.2" evidence="1"/>
<dbReference type="EMBL" id="AM421808">
    <property type="protein sequence ID" value="CAM10786.1"/>
    <property type="molecule type" value="Genomic_DNA"/>
</dbReference>
<dbReference type="RefSeq" id="WP_002220462.1">
    <property type="nucleotide sequence ID" value="NC_008767.1"/>
</dbReference>
<dbReference type="SMR" id="A1KV85"/>
<dbReference type="KEGG" id="nmc:NMC1594"/>
<dbReference type="HOGENOM" id="CLU_004620_3_2_4"/>
<dbReference type="Proteomes" id="UP000002286">
    <property type="component" value="Chromosome"/>
</dbReference>
<dbReference type="GO" id="GO:0005829">
    <property type="term" value="C:cytosol"/>
    <property type="evidence" value="ECO:0007669"/>
    <property type="project" value="TreeGrafter"/>
</dbReference>
<dbReference type="GO" id="GO:0005960">
    <property type="term" value="C:glycine cleavage complex"/>
    <property type="evidence" value="ECO:0007669"/>
    <property type="project" value="TreeGrafter"/>
</dbReference>
<dbReference type="GO" id="GO:0016594">
    <property type="term" value="F:glycine binding"/>
    <property type="evidence" value="ECO:0007669"/>
    <property type="project" value="TreeGrafter"/>
</dbReference>
<dbReference type="GO" id="GO:0004375">
    <property type="term" value="F:glycine dehydrogenase (decarboxylating) activity"/>
    <property type="evidence" value="ECO:0007669"/>
    <property type="project" value="UniProtKB-EC"/>
</dbReference>
<dbReference type="GO" id="GO:0030170">
    <property type="term" value="F:pyridoxal phosphate binding"/>
    <property type="evidence" value="ECO:0007669"/>
    <property type="project" value="TreeGrafter"/>
</dbReference>
<dbReference type="GO" id="GO:0019464">
    <property type="term" value="P:glycine decarboxylation via glycine cleavage system"/>
    <property type="evidence" value="ECO:0007669"/>
    <property type="project" value="UniProtKB-UniRule"/>
</dbReference>
<dbReference type="FunFam" id="3.40.640.10:FF:000005">
    <property type="entry name" value="Glycine dehydrogenase (decarboxylating), mitochondrial"/>
    <property type="match status" value="1"/>
</dbReference>
<dbReference type="FunFam" id="3.90.1150.10:FF:000007">
    <property type="entry name" value="Glycine dehydrogenase (decarboxylating), mitochondrial"/>
    <property type="match status" value="1"/>
</dbReference>
<dbReference type="FunFam" id="3.40.640.10:FF:000007">
    <property type="entry name" value="glycine dehydrogenase (Decarboxylating), mitochondrial"/>
    <property type="match status" value="1"/>
</dbReference>
<dbReference type="Gene3D" id="3.90.1150.10">
    <property type="entry name" value="Aspartate Aminotransferase, domain 1"/>
    <property type="match status" value="2"/>
</dbReference>
<dbReference type="Gene3D" id="3.40.640.10">
    <property type="entry name" value="Type I PLP-dependent aspartate aminotransferase-like (Major domain)"/>
    <property type="match status" value="2"/>
</dbReference>
<dbReference type="HAMAP" id="MF_00711">
    <property type="entry name" value="GcvP"/>
    <property type="match status" value="1"/>
</dbReference>
<dbReference type="InterPro" id="IPR003437">
    <property type="entry name" value="GcvP"/>
</dbReference>
<dbReference type="InterPro" id="IPR049316">
    <property type="entry name" value="GDC-P_C"/>
</dbReference>
<dbReference type="InterPro" id="IPR049315">
    <property type="entry name" value="GDC-P_N"/>
</dbReference>
<dbReference type="InterPro" id="IPR020581">
    <property type="entry name" value="GDC_P"/>
</dbReference>
<dbReference type="InterPro" id="IPR015424">
    <property type="entry name" value="PyrdxlP-dep_Trfase"/>
</dbReference>
<dbReference type="InterPro" id="IPR015421">
    <property type="entry name" value="PyrdxlP-dep_Trfase_major"/>
</dbReference>
<dbReference type="InterPro" id="IPR015422">
    <property type="entry name" value="PyrdxlP-dep_Trfase_small"/>
</dbReference>
<dbReference type="NCBIfam" id="TIGR00461">
    <property type="entry name" value="gcvP"/>
    <property type="match status" value="1"/>
</dbReference>
<dbReference type="NCBIfam" id="NF003346">
    <property type="entry name" value="PRK04366.1"/>
    <property type="match status" value="1"/>
</dbReference>
<dbReference type="PANTHER" id="PTHR11773:SF13">
    <property type="entry name" value="GLYCINE DEHYDROGENASE (DECARBOXYLATING)"/>
    <property type="match status" value="1"/>
</dbReference>
<dbReference type="PANTHER" id="PTHR11773">
    <property type="entry name" value="GLYCINE DEHYDROGENASE, DECARBOXYLATING"/>
    <property type="match status" value="1"/>
</dbReference>
<dbReference type="Pfam" id="PF21478">
    <property type="entry name" value="GcvP2_C"/>
    <property type="match status" value="1"/>
</dbReference>
<dbReference type="Pfam" id="PF02347">
    <property type="entry name" value="GDC-P"/>
    <property type="match status" value="2"/>
</dbReference>
<dbReference type="SUPFAM" id="SSF53383">
    <property type="entry name" value="PLP-dependent transferases"/>
    <property type="match status" value="2"/>
</dbReference>
<reference key="1">
    <citation type="journal article" date="2007" name="PLoS Genet.">
        <title>Meningococcal genetic variation mechanisms viewed through comparative analysis of serogroup C strain FAM18.</title>
        <authorList>
            <person name="Bentley S.D."/>
            <person name="Vernikos G.S."/>
            <person name="Snyder L.A.S."/>
            <person name="Churcher C."/>
            <person name="Arrowsmith C."/>
            <person name="Chillingworth T."/>
            <person name="Cronin A."/>
            <person name="Davis P.H."/>
            <person name="Holroyd N.E."/>
            <person name="Jagels K."/>
            <person name="Maddison M."/>
            <person name="Moule S."/>
            <person name="Rabbinowitsch E."/>
            <person name="Sharp S."/>
            <person name="Unwin L."/>
            <person name="Whitehead S."/>
            <person name="Quail M.A."/>
            <person name="Achtman M."/>
            <person name="Barrell B.G."/>
            <person name="Saunders N.J."/>
            <person name="Parkhill J."/>
        </authorList>
    </citation>
    <scope>NUCLEOTIDE SEQUENCE [LARGE SCALE GENOMIC DNA]</scope>
    <source>
        <strain>ATCC 700532 / DSM 15464 / FAM18</strain>
    </source>
</reference>